<dbReference type="EMBL" id="AP008232">
    <property type="protein sequence ID" value="BAE73622.1"/>
    <property type="molecule type" value="Genomic_DNA"/>
</dbReference>
<dbReference type="RefSeq" id="WP_011410210.1">
    <property type="nucleotide sequence ID" value="NC_007712.1"/>
</dbReference>
<dbReference type="SMR" id="Q2NW53"/>
<dbReference type="STRING" id="343509.SG0347"/>
<dbReference type="KEGG" id="sgl:SG0347"/>
<dbReference type="eggNOG" id="COG0238">
    <property type="taxonomic scope" value="Bacteria"/>
</dbReference>
<dbReference type="HOGENOM" id="CLU_148710_2_2_6"/>
<dbReference type="OrthoDB" id="9812008at2"/>
<dbReference type="BioCyc" id="SGLO343509:SGP1_RS03345-MONOMER"/>
<dbReference type="Proteomes" id="UP000001932">
    <property type="component" value="Chromosome"/>
</dbReference>
<dbReference type="GO" id="GO:0022627">
    <property type="term" value="C:cytosolic small ribosomal subunit"/>
    <property type="evidence" value="ECO:0007669"/>
    <property type="project" value="TreeGrafter"/>
</dbReference>
<dbReference type="GO" id="GO:0070181">
    <property type="term" value="F:small ribosomal subunit rRNA binding"/>
    <property type="evidence" value="ECO:0007669"/>
    <property type="project" value="TreeGrafter"/>
</dbReference>
<dbReference type="GO" id="GO:0003735">
    <property type="term" value="F:structural constituent of ribosome"/>
    <property type="evidence" value="ECO:0007669"/>
    <property type="project" value="InterPro"/>
</dbReference>
<dbReference type="GO" id="GO:0006412">
    <property type="term" value="P:translation"/>
    <property type="evidence" value="ECO:0007669"/>
    <property type="project" value="UniProtKB-UniRule"/>
</dbReference>
<dbReference type="FunFam" id="4.10.640.10:FF:000001">
    <property type="entry name" value="30S ribosomal protein S18"/>
    <property type="match status" value="1"/>
</dbReference>
<dbReference type="Gene3D" id="4.10.640.10">
    <property type="entry name" value="Ribosomal protein S18"/>
    <property type="match status" value="1"/>
</dbReference>
<dbReference type="HAMAP" id="MF_00270">
    <property type="entry name" value="Ribosomal_bS18"/>
    <property type="match status" value="1"/>
</dbReference>
<dbReference type="InterPro" id="IPR001648">
    <property type="entry name" value="Ribosomal_bS18"/>
</dbReference>
<dbReference type="InterPro" id="IPR018275">
    <property type="entry name" value="Ribosomal_bS18_CS"/>
</dbReference>
<dbReference type="InterPro" id="IPR036870">
    <property type="entry name" value="Ribosomal_bS18_sf"/>
</dbReference>
<dbReference type="NCBIfam" id="TIGR00165">
    <property type="entry name" value="S18"/>
    <property type="match status" value="1"/>
</dbReference>
<dbReference type="PANTHER" id="PTHR13479">
    <property type="entry name" value="30S RIBOSOMAL PROTEIN S18"/>
    <property type="match status" value="1"/>
</dbReference>
<dbReference type="PANTHER" id="PTHR13479:SF40">
    <property type="entry name" value="SMALL RIBOSOMAL SUBUNIT PROTEIN BS18M"/>
    <property type="match status" value="1"/>
</dbReference>
<dbReference type="Pfam" id="PF01084">
    <property type="entry name" value="Ribosomal_S18"/>
    <property type="match status" value="1"/>
</dbReference>
<dbReference type="PRINTS" id="PR00974">
    <property type="entry name" value="RIBOSOMALS18"/>
</dbReference>
<dbReference type="SUPFAM" id="SSF46911">
    <property type="entry name" value="Ribosomal protein S18"/>
    <property type="match status" value="1"/>
</dbReference>
<dbReference type="PROSITE" id="PS00057">
    <property type="entry name" value="RIBOSOMAL_S18"/>
    <property type="match status" value="1"/>
</dbReference>
<proteinExistence type="inferred from homology"/>
<protein>
    <recommendedName>
        <fullName evidence="1">Small ribosomal subunit protein bS18</fullName>
    </recommendedName>
    <alternativeName>
        <fullName evidence="2">30S ribosomal protein S18</fullName>
    </alternativeName>
</protein>
<name>RS18_SODGM</name>
<sequence length="75" mass="8987">MARYFRRRKFCRFTTEGVVEIDYKDIATLKNYITESGKIVPSRITGTRAKYQRQLARAIKRARYLSLLPYTDRHQ</sequence>
<comment type="function">
    <text evidence="1">Binds as a heterodimer with protein bS6 to the central domain of the 16S rRNA, where it helps stabilize the platform of the 30S subunit.</text>
</comment>
<comment type="subunit">
    <text evidence="1">Part of the 30S ribosomal subunit. Forms a tight heterodimer with protein bS6.</text>
</comment>
<comment type="similarity">
    <text evidence="1">Belongs to the bacterial ribosomal protein bS18 family.</text>
</comment>
<reference key="1">
    <citation type="journal article" date="2006" name="Genome Res.">
        <title>Massive genome erosion and functional adaptations provide insights into the symbiotic lifestyle of Sodalis glossinidius in the tsetse host.</title>
        <authorList>
            <person name="Toh H."/>
            <person name="Weiss B.L."/>
            <person name="Perkin S.A.H."/>
            <person name="Yamashita A."/>
            <person name="Oshima K."/>
            <person name="Hattori M."/>
            <person name="Aksoy S."/>
        </authorList>
    </citation>
    <scope>NUCLEOTIDE SEQUENCE [LARGE SCALE GENOMIC DNA]</scope>
    <source>
        <strain>morsitans</strain>
    </source>
</reference>
<feature type="chain" id="PRO_1000003617" description="Small ribosomal subunit protein bS18">
    <location>
        <begin position="1"/>
        <end position="75"/>
    </location>
</feature>
<gene>
    <name evidence="1" type="primary">rpsR</name>
    <name type="ordered locus">SG0347</name>
</gene>
<keyword id="KW-0687">Ribonucleoprotein</keyword>
<keyword id="KW-0689">Ribosomal protein</keyword>
<keyword id="KW-0694">RNA-binding</keyword>
<keyword id="KW-0699">rRNA-binding</keyword>
<organism>
    <name type="scientific">Sodalis glossinidius (strain morsitans)</name>
    <dbReference type="NCBI Taxonomy" id="343509"/>
    <lineage>
        <taxon>Bacteria</taxon>
        <taxon>Pseudomonadati</taxon>
        <taxon>Pseudomonadota</taxon>
        <taxon>Gammaproteobacteria</taxon>
        <taxon>Enterobacterales</taxon>
        <taxon>Bruguierivoracaceae</taxon>
        <taxon>Sodalis</taxon>
    </lineage>
</organism>
<accession>Q2NW53</accession>
<evidence type="ECO:0000255" key="1">
    <source>
        <dbReference type="HAMAP-Rule" id="MF_00270"/>
    </source>
</evidence>
<evidence type="ECO:0000305" key="2"/>